<proteinExistence type="evidence at protein level"/>
<gene>
    <name evidence="1 2" type="primary">cpfC</name>
    <name evidence="4" type="synonym">hemH</name>
    <name evidence="6" type="ordered locus">SAOUHSC_01961</name>
</gene>
<name>CPFC_STAA8</name>
<feature type="chain" id="PRO_0000450325" description="Coproporphyrin III ferrochelatase">
    <location>
        <begin position="1"/>
        <end position="307"/>
    </location>
</feature>
<feature type="binding site" description="axial binding residue" evidence="2">
    <location>
        <position position="12"/>
    </location>
    <ligand>
        <name>Fe-coproporphyrin III</name>
        <dbReference type="ChEBI" id="CHEBI:68438"/>
    </ligand>
    <ligandPart>
        <name>Fe</name>
        <dbReference type="ChEBI" id="CHEBI:18248"/>
    </ligandPart>
</feature>
<feature type="binding site" evidence="2">
    <location>
        <position position="29"/>
    </location>
    <ligand>
        <name>Fe-coproporphyrin III</name>
        <dbReference type="ChEBI" id="CHEBI:68438"/>
    </ligand>
</feature>
<feature type="binding site" evidence="2">
    <location>
        <begin position="45"/>
        <end position="46"/>
    </location>
    <ligand>
        <name>Fe-coproporphyrin III</name>
        <dbReference type="ChEBI" id="CHEBI:68438"/>
    </ligand>
</feature>
<feature type="binding site" evidence="2">
    <location>
        <position position="53"/>
    </location>
    <ligand>
        <name>Fe-coproporphyrin III</name>
        <dbReference type="ChEBI" id="CHEBI:68438"/>
    </ligand>
</feature>
<feature type="binding site" evidence="2">
    <location>
        <position position="124"/>
    </location>
    <ligand>
        <name>Fe-coproporphyrin III</name>
        <dbReference type="ChEBI" id="CHEBI:68438"/>
    </ligand>
</feature>
<feature type="binding site" evidence="1 2">
    <location>
        <position position="181"/>
    </location>
    <ligand>
        <name>Fe(2+)</name>
        <dbReference type="ChEBI" id="CHEBI:29033"/>
    </ligand>
</feature>
<feature type="binding site" evidence="1 2">
    <location>
        <position position="263"/>
    </location>
    <ligand>
        <name>Fe(2+)</name>
        <dbReference type="ChEBI" id="CHEBI:29033"/>
    </ligand>
</feature>
<protein>
    <recommendedName>
        <fullName evidence="2 4">Coproporphyrin III ferrochelatase</fullName>
        <ecNumber evidence="2 3">4.99.1.9</ecNumber>
    </recommendedName>
</protein>
<keyword id="KW-0963">Cytoplasm</keyword>
<keyword id="KW-0350">Heme biosynthesis</keyword>
<keyword id="KW-0408">Iron</keyword>
<keyword id="KW-0456">Lyase</keyword>
<keyword id="KW-0479">Metal-binding</keyword>
<keyword id="KW-0627">Porphyrin biosynthesis</keyword>
<keyword id="KW-1185">Reference proteome</keyword>
<organism>
    <name type="scientific">Staphylococcus aureus (strain NCTC 8325 / PS 47)</name>
    <dbReference type="NCBI Taxonomy" id="93061"/>
    <lineage>
        <taxon>Bacteria</taxon>
        <taxon>Bacillati</taxon>
        <taxon>Bacillota</taxon>
        <taxon>Bacilli</taxon>
        <taxon>Bacillales</taxon>
        <taxon>Staphylococcaceae</taxon>
        <taxon>Staphylococcus</taxon>
    </lineage>
</organism>
<comment type="function">
    <text evidence="3">Involved in coproporphyrin-dependent heme b biosynthesis (PubMed:25908396). Catalyzes the insertion of ferrous iron into coproporphyrin III to form Fe-coproporphyrin III (PubMed:25908396). It can also insert iron into protoporphyrin IX, but it has a much stronger preference for coproprophyrin III as the substrate (PubMed:25908396).</text>
</comment>
<comment type="catalytic activity">
    <reaction evidence="2 3">
        <text>Fe-coproporphyrin III + 2 H(+) = coproporphyrin III + Fe(2+)</text>
        <dbReference type="Rhea" id="RHEA:49572"/>
        <dbReference type="ChEBI" id="CHEBI:15378"/>
        <dbReference type="ChEBI" id="CHEBI:29033"/>
        <dbReference type="ChEBI" id="CHEBI:68438"/>
        <dbReference type="ChEBI" id="CHEBI:131725"/>
        <dbReference type="EC" id="4.99.1.9"/>
    </reaction>
    <physiologicalReaction direction="right-to-left" evidence="2 3">
        <dbReference type="Rhea" id="RHEA:49574"/>
    </physiologicalReaction>
</comment>
<comment type="biophysicochemical properties">
    <kinetics>
        <KM evidence="3">0.6 uM for Fe(2+) (in the presence of coproporphyrin III)</KM>
        <KM evidence="3">52 uM for Fe(2+) (in the presence of protoporphyrin IX)</KM>
        <text evidence="3">kcat is 165 min(-1) with coproporphyrin III as substrate. kcat is 15 min(-1) with protoporphyrin IX as substrate.</text>
    </kinetics>
</comment>
<comment type="pathway">
    <text evidence="2 3">Porphyrin-containing compound metabolism; protoheme biosynthesis.</text>
</comment>
<comment type="subcellular location">
    <subcellularLocation>
        <location evidence="2">Cytoplasm</location>
    </subcellularLocation>
</comment>
<comment type="disruption phenotype">
    <text evidence="3">Mutant accumulates coproporphyrin III.</text>
</comment>
<comment type="similarity">
    <text evidence="2 5">Belongs to the ferrochelatase family.</text>
</comment>
<evidence type="ECO:0000250" key="1">
    <source>
        <dbReference type="UniProtKB" id="P32396"/>
    </source>
</evidence>
<evidence type="ECO:0000255" key="2">
    <source>
        <dbReference type="HAMAP-Rule" id="MF_00323"/>
    </source>
</evidence>
<evidence type="ECO:0000269" key="3">
    <source>
    </source>
</evidence>
<evidence type="ECO:0000303" key="4">
    <source>
    </source>
</evidence>
<evidence type="ECO:0000305" key="5"/>
<evidence type="ECO:0000312" key="6">
    <source>
        <dbReference type="EMBL" id="ABD31022.1"/>
    </source>
</evidence>
<dbReference type="EC" id="4.99.1.9" evidence="2 3"/>
<dbReference type="EMBL" id="CP000253">
    <property type="protein sequence ID" value="ABD31022.1"/>
    <property type="molecule type" value="Genomic_DNA"/>
</dbReference>
<dbReference type="RefSeq" id="WP_000162880.1">
    <property type="nucleotide sequence ID" value="NZ_LS483365.1"/>
</dbReference>
<dbReference type="RefSeq" id="YP_500460.1">
    <property type="nucleotide sequence ID" value="NC_007795.1"/>
</dbReference>
<dbReference type="SMR" id="Q2FXA4"/>
<dbReference type="STRING" id="93061.SAOUHSC_01961"/>
<dbReference type="PaxDb" id="1280-SAXN108_1862"/>
<dbReference type="GeneID" id="3920906"/>
<dbReference type="KEGG" id="sao:SAOUHSC_01961"/>
<dbReference type="PATRIC" id="fig|93061.5.peg.1786"/>
<dbReference type="eggNOG" id="COG0276">
    <property type="taxonomic scope" value="Bacteria"/>
</dbReference>
<dbReference type="HOGENOM" id="CLU_018884_2_1_9"/>
<dbReference type="OrthoDB" id="9776380at2"/>
<dbReference type="UniPathway" id="UPA00252"/>
<dbReference type="Proteomes" id="UP000008816">
    <property type="component" value="Chromosome"/>
</dbReference>
<dbReference type="GO" id="GO:0005737">
    <property type="term" value="C:cytoplasm"/>
    <property type="evidence" value="ECO:0007669"/>
    <property type="project" value="UniProtKB-SubCell"/>
</dbReference>
<dbReference type="GO" id="GO:0004325">
    <property type="term" value="F:ferrochelatase activity"/>
    <property type="evidence" value="ECO:0000318"/>
    <property type="project" value="GO_Central"/>
</dbReference>
<dbReference type="GO" id="GO:0046872">
    <property type="term" value="F:metal ion binding"/>
    <property type="evidence" value="ECO:0007669"/>
    <property type="project" value="UniProtKB-KW"/>
</dbReference>
<dbReference type="GO" id="GO:0006783">
    <property type="term" value="P:heme biosynthetic process"/>
    <property type="evidence" value="ECO:0000318"/>
    <property type="project" value="GO_Central"/>
</dbReference>
<dbReference type="CDD" id="cd00419">
    <property type="entry name" value="Ferrochelatase_C"/>
    <property type="match status" value="1"/>
</dbReference>
<dbReference type="CDD" id="cd03411">
    <property type="entry name" value="Ferrochelatase_N"/>
    <property type="match status" value="1"/>
</dbReference>
<dbReference type="FunFam" id="3.40.50.1400:FF:000009">
    <property type="entry name" value="Ferrochelatase"/>
    <property type="match status" value="1"/>
</dbReference>
<dbReference type="Gene3D" id="3.40.50.1400">
    <property type="match status" value="2"/>
</dbReference>
<dbReference type="HAMAP" id="MF_00323">
    <property type="entry name" value="Ferrochelatase"/>
    <property type="match status" value="1"/>
</dbReference>
<dbReference type="InterPro" id="IPR001015">
    <property type="entry name" value="Ferrochelatase"/>
</dbReference>
<dbReference type="InterPro" id="IPR019772">
    <property type="entry name" value="Ferrochelatase_AS"/>
</dbReference>
<dbReference type="InterPro" id="IPR033644">
    <property type="entry name" value="Ferrochelatase_C"/>
</dbReference>
<dbReference type="InterPro" id="IPR033659">
    <property type="entry name" value="Ferrochelatase_N"/>
</dbReference>
<dbReference type="NCBIfam" id="TIGR00109">
    <property type="entry name" value="hemH"/>
    <property type="match status" value="1"/>
</dbReference>
<dbReference type="NCBIfam" id="NF009095">
    <property type="entry name" value="PRK12435.1"/>
    <property type="match status" value="1"/>
</dbReference>
<dbReference type="PANTHER" id="PTHR11108">
    <property type="entry name" value="FERROCHELATASE"/>
    <property type="match status" value="1"/>
</dbReference>
<dbReference type="PANTHER" id="PTHR11108:SF1">
    <property type="entry name" value="FERROCHELATASE, MITOCHONDRIAL"/>
    <property type="match status" value="1"/>
</dbReference>
<dbReference type="Pfam" id="PF00762">
    <property type="entry name" value="Ferrochelatase"/>
    <property type="match status" value="1"/>
</dbReference>
<dbReference type="SUPFAM" id="SSF53800">
    <property type="entry name" value="Chelatase"/>
    <property type="match status" value="1"/>
</dbReference>
<dbReference type="PROSITE" id="PS00534">
    <property type="entry name" value="FERROCHELATASE"/>
    <property type="match status" value="1"/>
</dbReference>
<accession>Q2FXA4</accession>
<sequence>MTKKMGLLVMAYGTPYKESDIEPYYTDIRHGKRPSEEELQDLKDRYEFIGGLSPLAGTTDDQADALVSALNKAYADVEFKLYLGLKHISPFIEDAVEQMHNDGITEAITVVLAPHYSSFSVGSYDKRADEEAAKYGIQLTHVKHYYEQPKFIEYWTNKVNETLAQIPEEEHKDTVLVVSAHSLPKGLIEKNNDPYPQELEHTALLIKEQSNIEHIAIGWQSEGNTGTPWLGPDVQDLTRDLYEKHQYKNFIYTPVGFVCEHLEVLYDNDYECKVVCDDIGANYYRPKMPNTHPLFIGAIIDEIKSIF</sequence>
<reference key="1">
    <citation type="book" date="2006" name="Gram positive pathogens, 2nd edition">
        <title>The Staphylococcus aureus NCTC 8325 genome.</title>
        <editorList>
            <person name="Fischetti V."/>
            <person name="Novick R."/>
            <person name="Ferretti J."/>
            <person name="Portnoy D."/>
            <person name="Rood J."/>
        </editorList>
        <authorList>
            <person name="Gillaspy A.F."/>
            <person name="Worrell V."/>
            <person name="Orvis J."/>
            <person name="Roe B.A."/>
            <person name="Dyer D.W."/>
            <person name="Iandolo J.J."/>
        </authorList>
    </citation>
    <scope>NUCLEOTIDE SEQUENCE [LARGE SCALE GENOMIC DNA]</scope>
    <source>
        <strain>NCTC 8325 / PS 47</strain>
    </source>
</reference>
<reference key="2">
    <citation type="journal article" date="2015" name="Mol. Microbiol.">
        <title>Staphylococcus aureus haem biosynthesis: characterisation of the enzymes involved in final steps of the pathway.</title>
        <authorList>
            <person name="Lobo S.A."/>
            <person name="Scott A."/>
            <person name="Videira M.A."/>
            <person name="Winpenny D."/>
            <person name="Gardner M."/>
            <person name="Palmer M.J."/>
            <person name="Schroeder S."/>
            <person name="Lawrence A.D."/>
            <person name="Parkinson T."/>
            <person name="Warren M.J."/>
            <person name="Saraiva L.M."/>
        </authorList>
    </citation>
    <scope>FUNCTION</scope>
    <scope>CATALYTIC ACTIVITY</scope>
    <scope>BIOPHYSICOCHEMICAL PROPERTIES</scope>
    <scope>PATHWAY</scope>
    <scope>DISRUPTION PHENOTYPE</scope>
    <source>
        <strain>NCTC 8325 / PS 47</strain>
    </source>
</reference>